<sequence length="156" mass="16002">MEAYLFLIGLVLIGVIAQNKSLIIAAAFLLIIKAIGLDGRLFPSLQAKGITWGVTLITAAILVPIATGDIGFRELLNSVRGHIGIISFLAGIFVAIIAAHGVGLMKEDPLVTTALLAGTILAVGLFRGVPVGPLIGAGIAALVIGMWDIIVKAISG</sequence>
<accession>B1YKA9</accession>
<evidence type="ECO:0000255" key="1">
    <source>
        <dbReference type="HAMAP-Rule" id="MF_01874"/>
    </source>
</evidence>
<name>Y2210_EXIS2</name>
<gene>
    <name type="ordered locus">Exig_2210</name>
</gene>
<comment type="subcellular location">
    <subcellularLocation>
        <location evidence="1">Cell membrane</location>
        <topology evidence="1">Multi-pass membrane protein</topology>
    </subcellularLocation>
</comment>
<comment type="similarity">
    <text evidence="1">Belongs to the UPF0756 family.</text>
</comment>
<proteinExistence type="inferred from homology"/>
<dbReference type="EMBL" id="CP001022">
    <property type="protein sequence ID" value="ACB61662.1"/>
    <property type="molecule type" value="Genomic_DNA"/>
</dbReference>
<dbReference type="RefSeq" id="WP_012371079.1">
    <property type="nucleotide sequence ID" value="NC_010556.1"/>
</dbReference>
<dbReference type="STRING" id="262543.Exig_2210"/>
<dbReference type="KEGG" id="esi:Exig_2210"/>
<dbReference type="eggNOG" id="COG2707">
    <property type="taxonomic scope" value="Bacteria"/>
</dbReference>
<dbReference type="HOGENOM" id="CLU_125889_1_0_9"/>
<dbReference type="OrthoDB" id="80306at2"/>
<dbReference type="Proteomes" id="UP000001681">
    <property type="component" value="Chromosome"/>
</dbReference>
<dbReference type="GO" id="GO:0005886">
    <property type="term" value="C:plasma membrane"/>
    <property type="evidence" value="ECO:0007669"/>
    <property type="project" value="UniProtKB-SubCell"/>
</dbReference>
<dbReference type="HAMAP" id="MF_01874">
    <property type="entry name" value="UPF0756"/>
    <property type="match status" value="1"/>
</dbReference>
<dbReference type="InterPro" id="IPR007382">
    <property type="entry name" value="UPF0756_TM"/>
</dbReference>
<dbReference type="PANTHER" id="PTHR38452">
    <property type="entry name" value="UPF0756 MEMBRANE PROTEIN YEAL"/>
    <property type="match status" value="1"/>
</dbReference>
<dbReference type="PANTHER" id="PTHR38452:SF1">
    <property type="entry name" value="UPF0756 MEMBRANE PROTEIN YEAL"/>
    <property type="match status" value="1"/>
</dbReference>
<dbReference type="Pfam" id="PF04284">
    <property type="entry name" value="DUF441"/>
    <property type="match status" value="1"/>
</dbReference>
<reference key="1">
    <citation type="submission" date="2008-04" db="EMBL/GenBank/DDBJ databases">
        <title>Complete sequence of chromosome of Exiguobacterium sibiricum 255-15.</title>
        <authorList>
            <consortium name="US DOE Joint Genome Institute"/>
            <person name="Copeland A."/>
            <person name="Lucas S."/>
            <person name="Lapidus A."/>
            <person name="Glavina del Rio T."/>
            <person name="Dalin E."/>
            <person name="Tice H."/>
            <person name="Bruce D."/>
            <person name="Goodwin L."/>
            <person name="Pitluck S."/>
            <person name="Kiss H."/>
            <person name="Chertkov O."/>
            <person name="Monk C."/>
            <person name="Brettin T."/>
            <person name="Detter J.C."/>
            <person name="Han C."/>
            <person name="Kuske C.R."/>
            <person name="Schmutz J."/>
            <person name="Larimer F."/>
            <person name="Land M."/>
            <person name="Hauser L."/>
            <person name="Kyrpides N."/>
            <person name="Mikhailova N."/>
            <person name="Vishnivetskaya T."/>
            <person name="Rodrigues D.F."/>
            <person name="Gilichinsky D."/>
            <person name="Tiedje J."/>
            <person name="Richardson P."/>
        </authorList>
    </citation>
    <scope>NUCLEOTIDE SEQUENCE [LARGE SCALE GENOMIC DNA]</scope>
    <source>
        <strain>DSM 17290 / CCUG 55495 / CIP 109462 / JCM 13490 / 255-15</strain>
    </source>
</reference>
<protein>
    <recommendedName>
        <fullName evidence="1">UPF0756 membrane protein Exig_2210</fullName>
    </recommendedName>
</protein>
<feature type="chain" id="PRO_0000388875" description="UPF0756 membrane protein Exig_2210">
    <location>
        <begin position="1"/>
        <end position="156"/>
    </location>
</feature>
<feature type="transmembrane region" description="Helical" evidence="1">
    <location>
        <begin position="5"/>
        <end position="25"/>
    </location>
</feature>
<feature type="transmembrane region" description="Helical" evidence="1">
    <location>
        <begin position="52"/>
        <end position="72"/>
    </location>
</feature>
<feature type="transmembrane region" description="Helical" evidence="1">
    <location>
        <begin position="83"/>
        <end position="103"/>
    </location>
</feature>
<feature type="transmembrane region" description="Helical" evidence="1">
    <location>
        <begin position="109"/>
        <end position="129"/>
    </location>
</feature>
<feature type="transmembrane region" description="Helical" evidence="1">
    <location>
        <begin position="131"/>
        <end position="151"/>
    </location>
</feature>
<organism>
    <name type="scientific">Exiguobacterium sibiricum (strain DSM 17290 / CCUG 55495 / CIP 109462 / JCM 13490 / 255-15)</name>
    <dbReference type="NCBI Taxonomy" id="262543"/>
    <lineage>
        <taxon>Bacteria</taxon>
        <taxon>Bacillati</taxon>
        <taxon>Bacillota</taxon>
        <taxon>Bacilli</taxon>
        <taxon>Bacillales</taxon>
        <taxon>Bacillales Family XII. Incertae Sedis</taxon>
        <taxon>Exiguobacterium</taxon>
    </lineage>
</organism>
<keyword id="KW-1003">Cell membrane</keyword>
<keyword id="KW-0472">Membrane</keyword>
<keyword id="KW-1185">Reference proteome</keyword>
<keyword id="KW-0812">Transmembrane</keyword>
<keyword id="KW-1133">Transmembrane helix</keyword>